<organism>
    <name type="scientific">Bartonella bacilliformis (strain ATCC 35685 / KC583 / Herrer 020/F12,63)</name>
    <dbReference type="NCBI Taxonomy" id="360095"/>
    <lineage>
        <taxon>Bacteria</taxon>
        <taxon>Pseudomonadati</taxon>
        <taxon>Pseudomonadota</taxon>
        <taxon>Alphaproteobacteria</taxon>
        <taxon>Hyphomicrobiales</taxon>
        <taxon>Bartonellaceae</taxon>
        <taxon>Bartonella</taxon>
    </lineage>
</organism>
<reference key="1">
    <citation type="submission" date="2002-01" db="EMBL/GenBank/DDBJ databases">
        <title>Translational machinery operon from Bartonella bacilliformis.</title>
        <authorList>
            <person name="Minnick M.F."/>
            <person name="Choquette L.E."/>
        </authorList>
    </citation>
    <scope>NUCLEOTIDE SEQUENCE [GENOMIC DNA]</scope>
</reference>
<reference key="2">
    <citation type="submission" date="2006-12" db="EMBL/GenBank/DDBJ databases">
        <authorList>
            <person name="Hendrix L."/>
            <person name="Mohamoud Y."/>
            <person name="Radune D."/>
            <person name="Shvartsbeyn A."/>
            <person name="Daugherty S."/>
            <person name="Dodson R."/>
            <person name="Durkin A.S."/>
            <person name="Harkins D."/>
            <person name="Huot H."/>
            <person name="Kothari S.P."/>
            <person name="Madupu R."/>
            <person name="Li J."/>
            <person name="Nelson W.C."/>
            <person name="Shrivastava S."/>
            <person name="Giglio M.G."/>
            <person name="Haft D."/>
            <person name="Selengut J."/>
            <person name="Fraser-Ligget C."/>
            <person name="Seshadri R."/>
        </authorList>
    </citation>
    <scope>NUCLEOTIDE SEQUENCE [LARGE SCALE GENOMIC DNA]</scope>
    <source>
        <strain>ATCC 35685 / KC583 / Herrer 020/F12,63</strain>
    </source>
</reference>
<feature type="chain" id="PRO_0000143826" description="Uridylate kinase">
    <location>
        <begin position="1"/>
        <end position="239"/>
    </location>
</feature>
<feature type="binding site" evidence="1">
    <location>
        <begin position="13"/>
        <end position="16"/>
    </location>
    <ligand>
        <name>ATP</name>
        <dbReference type="ChEBI" id="CHEBI:30616"/>
    </ligand>
</feature>
<feature type="binding site" evidence="1">
    <location>
        <position position="55"/>
    </location>
    <ligand>
        <name>UMP</name>
        <dbReference type="ChEBI" id="CHEBI:57865"/>
    </ligand>
</feature>
<feature type="binding site" evidence="1">
    <location>
        <position position="56"/>
    </location>
    <ligand>
        <name>ATP</name>
        <dbReference type="ChEBI" id="CHEBI:30616"/>
    </ligand>
</feature>
<feature type="binding site" evidence="1">
    <location>
        <position position="60"/>
    </location>
    <ligand>
        <name>ATP</name>
        <dbReference type="ChEBI" id="CHEBI:30616"/>
    </ligand>
</feature>
<feature type="binding site" evidence="1">
    <location>
        <position position="75"/>
    </location>
    <ligand>
        <name>UMP</name>
        <dbReference type="ChEBI" id="CHEBI:57865"/>
    </ligand>
</feature>
<feature type="binding site" evidence="1">
    <location>
        <begin position="136"/>
        <end position="143"/>
    </location>
    <ligand>
        <name>UMP</name>
        <dbReference type="ChEBI" id="CHEBI:57865"/>
    </ligand>
</feature>
<feature type="binding site" evidence="1">
    <location>
        <position position="163"/>
    </location>
    <ligand>
        <name>ATP</name>
        <dbReference type="ChEBI" id="CHEBI:30616"/>
    </ligand>
</feature>
<feature type="binding site" evidence="1">
    <location>
        <position position="164"/>
    </location>
    <ligand>
        <name>ATP</name>
        <dbReference type="ChEBI" id="CHEBI:30616"/>
    </ligand>
</feature>
<feature type="binding site" evidence="1">
    <location>
        <position position="169"/>
    </location>
    <ligand>
        <name>ATP</name>
        <dbReference type="ChEBI" id="CHEBI:30616"/>
    </ligand>
</feature>
<feature type="binding site" evidence="1">
    <location>
        <position position="172"/>
    </location>
    <ligand>
        <name>ATP</name>
        <dbReference type="ChEBI" id="CHEBI:30616"/>
    </ligand>
</feature>
<name>PYRH_BARBK</name>
<sequence length="239" mass="25346">MTLALRYKRVLLKVSGEALMGEQSFGIDVSVADRIASDIAEVRKMGVEVAIVIGGGNIFRGVAVASHGGDRVTGDHMGMLATAINSLALRTSLTKLGVETVVLSAITMPQICESFSQRKAMSYMNQGKVVIFAGGTGNPFFTTDSAATLRAAEIGADVLLKGTQVDGIYSADPKINSTAKRFDQLTHVEILRLGLSIMDTTAVTLARENNIPIIVYSIHEKGGLTKVLNGTGRFTVVSE</sequence>
<keyword id="KW-0067">ATP-binding</keyword>
<keyword id="KW-0963">Cytoplasm</keyword>
<keyword id="KW-0418">Kinase</keyword>
<keyword id="KW-0547">Nucleotide-binding</keyword>
<keyword id="KW-0665">Pyrimidine biosynthesis</keyword>
<keyword id="KW-0808">Transferase</keyword>
<evidence type="ECO:0000255" key="1">
    <source>
        <dbReference type="HAMAP-Rule" id="MF_01220"/>
    </source>
</evidence>
<protein>
    <recommendedName>
        <fullName evidence="1">Uridylate kinase</fullName>
        <shortName evidence="1">UK</shortName>
        <ecNumber evidence="1">2.7.4.22</ecNumber>
    </recommendedName>
    <alternativeName>
        <fullName evidence="1">Uridine monophosphate kinase</fullName>
        <shortName evidence="1">UMP kinase</shortName>
        <shortName evidence="1">UMPK</shortName>
    </alternativeName>
</protein>
<gene>
    <name evidence="1" type="primary">pyrH</name>
    <name type="synonym">uka</name>
    <name type="ordered locus">BARBAKC583_0585</name>
</gene>
<comment type="function">
    <text evidence="1">Catalyzes the reversible phosphorylation of UMP to UDP.</text>
</comment>
<comment type="catalytic activity">
    <reaction evidence="1">
        <text>UMP + ATP = UDP + ADP</text>
        <dbReference type="Rhea" id="RHEA:24400"/>
        <dbReference type="ChEBI" id="CHEBI:30616"/>
        <dbReference type="ChEBI" id="CHEBI:57865"/>
        <dbReference type="ChEBI" id="CHEBI:58223"/>
        <dbReference type="ChEBI" id="CHEBI:456216"/>
        <dbReference type="EC" id="2.7.4.22"/>
    </reaction>
</comment>
<comment type="activity regulation">
    <text evidence="1">Inhibited by UTP.</text>
</comment>
<comment type="pathway">
    <text evidence="1">Pyrimidine metabolism; CTP biosynthesis via de novo pathway; UDP from UMP (UMPK route): step 1/1.</text>
</comment>
<comment type="subunit">
    <text evidence="1">Homohexamer.</text>
</comment>
<comment type="subcellular location">
    <subcellularLocation>
        <location evidence="1">Cytoplasm</location>
    </subcellularLocation>
</comment>
<comment type="similarity">
    <text evidence="1">Belongs to the UMP kinase family.</text>
</comment>
<proteinExistence type="inferred from homology"/>
<accession>Q8RT65</accession>
<accession>A1USE1</accession>
<dbReference type="EC" id="2.7.4.22" evidence="1"/>
<dbReference type="EMBL" id="AF469610">
    <property type="protein sequence ID" value="AAL82406.1"/>
    <property type="molecule type" value="Genomic_DNA"/>
</dbReference>
<dbReference type="EMBL" id="CP000524">
    <property type="protein sequence ID" value="ABM44422.1"/>
    <property type="molecule type" value="Genomic_DNA"/>
</dbReference>
<dbReference type="RefSeq" id="WP_005766751.1">
    <property type="nucleotide sequence ID" value="NC_008783.1"/>
</dbReference>
<dbReference type="SMR" id="Q8RT65"/>
<dbReference type="STRING" id="360095.BARBAKC583_0585"/>
<dbReference type="GeneID" id="4683792"/>
<dbReference type="KEGG" id="bbk:BARBAKC583_0585"/>
<dbReference type="PATRIC" id="fig|360095.6.peg.570"/>
<dbReference type="eggNOG" id="COG0528">
    <property type="taxonomic scope" value="Bacteria"/>
</dbReference>
<dbReference type="HOGENOM" id="CLU_033861_0_0_5"/>
<dbReference type="OrthoDB" id="9807458at2"/>
<dbReference type="UniPathway" id="UPA00159">
    <property type="reaction ID" value="UER00275"/>
</dbReference>
<dbReference type="Proteomes" id="UP000000643">
    <property type="component" value="Chromosome"/>
</dbReference>
<dbReference type="GO" id="GO:0005829">
    <property type="term" value="C:cytosol"/>
    <property type="evidence" value="ECO:0007669"/>
    <property type="project" value="TreeGrafter"/>
</dbReference>
<dbReference type="GO" id="GO:0005524">
    <property type="term" value="F:ATP binding"/>
    <property type="evidence" value="ECO:0007669"/>
    <property type="project" value="UniProtKB-KW"/>
</dbReference>
<dbReference type="GO" id="GO:0033862">
    <property type="term" value="F:UMP kinase activity"/>
    <property type="evidence" value="ECO:0007669"/>
    <property type="project" value="UniProtKB-EC"/>
</dbReference>
<dbReference type="GO" id="GO:0044210">
    <property type="term" value="P:'de novo' CTP biosynthetic process"/>
    <property type="evidence" value="ECO:0007669"/>
    <property type="project" value="UniProtKB-UniRule"/>
</dbReference>
<dbReference type="GO" id="GO:0006225">
    <property type="term" value="P:UDP biosynthetic process"/>
    <property type="evidence" value="ECO:0007669"/>
    <property type="project" value="TreeGrafter"/>
</dbReference>
<dbReference type="CDD" id="cd04254">
    <property type="entry name" value="AAK_UMPK-PyrH-Ec"/>
    <property type="match status" value="1"/>
</dbReference>
<dbReference type="FunFam" id="3.40.1160.10:FF:000001">
    <property type="entry name" value="Uridylate kinase"/>
    <property type="match status" value="1"/>
</dbReference>
<dbReference type="Gene3D" id="3.40.1160.10">
    <property type="entry name" value="Acetylglutamate kinase-like"/>
    <property type="match status" value="1"/>
</dbReference>
<dbReference type="HAMAP" id="MF_01220_B">
    <property type="entry name" value="PyrH_B"/>
    <property type="match status" value="1"/>
</dbReference>
<dbReference type="InterPro" id="IPR036393">
    <property type="entry name" value="AceGlu_kinase-like_sf"/>
</dbReference>
<dbReference type="InterPro" id="IPR001048">
    <property type="entry name" value="Asp/Glu/Uridylate_kinase"/>
</dbReference>
<dbReference type="InterPro" id="IPR011817">
    <property type="entry name" value="Uridylate_kinase"/>
</dbReference>
<dbReference type="InterPro" id="IPR015963">
    <property type="entry name" value="Uridylate_kinase_bac"/>
</dbReference>
<dbReference type="NCBIfam" id="TIGR02075">
    <property type="entry name" value="pyrH_bact"/>
    <property type="match status" value="1"/>
</dbReference>
<dbReference type="PANTHER" id="PTHR42833">
    <property type="entry name" value="URIDYLATE KINASE"/>
    <property type="match status" value="1"/>
</dbReference>
<dbReference type="PANTHER" id="PTHR42833:SF4">
    <property type="entry name" value="URIDYLATE KINASE PUMPKIN, CHLOROPLASTIC"/>
    <property type="match status" value="1"/>
</dbReference>
<dbReference type="Pfam" id="PF00696">
    <property type="entry name" value="AA_kinase"/>
    <property type="match status" value="1"/>
</dbReference>
<dbReference type="PIRSF" id="PIRSF005650">
    <property type="entry name" value="Uridylate_kin"/>
    <property type="match status" value="1"/>
</dbReference>
<dbReference type="SUPFAM" id="SSF53633">
    <property type="entry name" value="Carbamate kinase-like"/>
    <property type="match status" value="1"/>
</dbReference>